<proteinExistence type="inferred from homology"/>
<sequence length="133" mass="14048">MGPLLGMVGAGAAGSAIGEGLGMLRDKWNRDFQERMSNTQYQRARKDMEAAGINPLAQFGSGQASSPSGGVSGSSFGSNITSMLGSSANMLMQLSKLKEDAERANFGSKTVQTINDARNNMVRSVITLSKRVK</sequence>
<protein>
    <recommendedName>
        <fullName>Minor spike protein H</fullName>
    </recommendedName>
    <alternativeName>
        <fullName>H protein</fullName>
    </alternativeName>
    <alternativeName>
        <fullName>Pilot protein</fullName>
    </alternativeName>
</protein>
<reference key="1">
    <citation type="journal article" date="1987" name="J. Bacteriol.">
        <title>Spiroplasma virus 4: nucleotide sequence of the viral DNA, regulatory signals, and proposed genome organization.</title>
        <authorList>
            <person name="Renaudin J."/>
            <person name="Pascarel M.-C."/>
            <person name="Bove J.-M."/>
        </authorList>
    </citation>
    <scope>NUCLEOTIDE SEQUENCE [GENOMIC DNA]</scope>
</reference>
<gene>
    <name type="ORF">ORF4</name>
</gene>
<comment type="function">
    <text evidence="1">Probably triggers with protein G the injection of the phage DNA into the host upon conformational changes induced by virus-host receptor interaction.</text>
</comment>
<comment type="subcellular location">
    <subcellularLocation>
        <location evidence="2">Virion</location>
    </subcellularLocation>
</comment>
<comment type="similarity">
    <text evidence="2">Belongs to the microviridae H protein family.</text>
</comment>
<keyword id="KW-0167">Capsid protein</keyword>
<keyword id="KW-0945">Host-virus interaction</keyword>
<keyword id="KW-1185">Reference proteome</keyword>
<keyword id="KW-1171">Viral genome ejection through host cell envelope</keyword>
<keyword id="KW-1162">Viral penetration into host cytoplasm</keyword>
<keyword id="KW-0946">Virion</keyword>
<keyword id="KW-1160">Virus entry into host cell</keyword>
<feature type="chain" id="PRO_0000065796" description="Minor spike protein H">
    <location>
        <begin position="1"/>
        <end position="133"/>
    </location>
</feature>
<name>H_SPV4</name>
<organism>
    <name type="scientific">Spiroplasma virus 4</name>
    <name type="common">SpV4</name>
    <dbReference type="NCBI Taxonomy" id="2928746"/>
    <lineage>
        <taxon>Viruses</taxon>
        <taxon>Monodnaviria</taxon>
        <taxon>Sangervirae</taxon>
        <taxon>Phixviricota</taxon>
        <taxon>Malgrandaviricetes</taxon>
        <taxon>Petitvirales</taxon>
        <taxon>Microviridae</taxon>
        <taxon>Gokushovirinae</taxon>
        <taxon>Spiromicrovirus</taxon>
        <taxon>Spiromicrovirus SpV4</taxon>
    </lineage>
</organism>
<evidence type="ECO:0000250" key="1"/>
<evidence type="ECO:0000305" key="2"/>
<dbReference type="EMBL" id="M17988">
    <property type="status" value="NOT_ANNOTATED_CDS"/>
    <property type="molecule type" value="Genomic_DNA"/>
</dbReference>
<dbReference type="PIR" id="G29825">
    <property type="entry name" value="G4BPSV"/>
</dbReference>
<dbReference type="SMR" id="P11336"/>
<dbReference type="Proteomes" id="UP000002101">
    <property type="component" value="Genome"/>
</dbReference>
<dbReference type="GO" id="GO:0019028">
    <property type="term" value="C:viral capsid"/>
    <property type="evidence" value="ECO:0007669"/>
    <property type="project" value="UniProtKB-KW"/>
</dbReference>
<dbReference type="GO" id="GO:0046718">
    <property type="term" value="P:symbiont entry into host cell"/>
    <property type="evidence" value="ECO:0007669"/>
    <property type="project" value="UniProtKB-KW"/>
</dbReference>
<accession>P11336</accession>
<organismHost>
    <name type="scientific">Spiroplasma melliferum</name>
    <dbReference type="NCBI Taxonomy" id="2134"/>
</organismHost>